<reference key="1">
    <citation type="journal article" date="1994" name="Genomics">
        <title>Isolation and expression of a cDNA encoding the precursor for a novel member (ACADSB) of the acyl-CoA dehydrogenase gene family.</title>
        <authorList>
            <person name="Rozen R."/>
            <person name="Vockley J."/>
            <person name="Zhou L."/>
            <person name="Milos R."/>
            <person name="Willard J."/>
            <person name="Fu K."/>
            <person name="Vicanek C."/>
            <person name="Low-Nang L."/>
            <person name="Torban E."/>
            <person name="Fournier B."/>
        </authorList>
    </citation>
    <scope>NUCLEOTIDE SEQUENCE [MRNA] (ISOFORM 1)</scope>
    <scope>FUNCTION</scope>
    <scope>CATALYTIC ACTIVITY</scope>
    <scope>SUBSTRATE SPECIFICITY</scope>
    <scope>TRANSIT PEPTIDE</scope>
    <source>
        <tissue>Liver</tissue>
    </source>
</reference>
<reference key="2">
    <citation type="journal article" date="2000" name="Am. J. Hum. Genet.">
        <title>Isolated 2-methylbutyrylglycinuria caused by short/branched-chain acyl-CoA dehydrogenase deficiency: identification of a new enzyme defect, resolution of its molecular basis, and evidence for distinct acyl-CoA dehydrogenases in isoleucine and valine metabolism.</title>
        <authorList>
            <person name="Andresen B.S."/>
            <person name="Christensen E."/>
            <person name="Corydon T.J."/>
            <person name="Bross P."/>
            <person name="Pilgaard B."/>
            <person name="Wanders R.J.A."/>
            <person name="Ruiter J.P.N."/>
            <person name="Simonsen H."/>
            <person name="Winter V."/>
            <person name="Knudsen I."/>
            <person name="Schroeder L.D."/>
            <person name="Gregersen N."/>
            <person name="Skovby F."/>
        </authorList>
    </citation>
    <scope>NUCLEOTIDE SEQUENCE [GENOMIC DNA]</scope>
    <scope>FUNCTION</scope>
    <scope>CATALYTIC ACTIVITY</scope>
    <scope>PATHWAY</scope>
    <scope>INVOLVEMENT IN SBCADD</scope>
    <scope>SUBUNIT</scope>
    <scope>SUBCELLULAR LOCATION</scope>
</reference>
<reference key="3">
    <citation type="journal article" date="2004" name="Nat. Genet.">
        <title>Complete sequencing and characterization of 21,243 full-length human cDNAs.</title>
        <authorList>
            <person name="Ota T."/>
            <person name="Suzuki Y."/>
            <person name="Nishikawa T."/>
            <person name="Otsuki T."/>
            <person name="Sugiyama T."/>
            <person name="Irie R."/>
            <person name="Wakamatsu A."/>
            <person name="Hayashi K."/>
            <person name="Sato H."/>
            <person name="Nagai K."/>
            <person name="Kimura K."/>
            <person name="Makita H."/>
            <person name="Sekine M."/>
            <person name="Obayashi M."/>
            <person name="Nishi T."/>
            <person name="Shibahara T."/>
            <person name="Tanaka T."/>
            <person name="Ishii S."/>
            <person name="Yamamoto J."/>
            <person name="Saito K."/>
            <person name="Kawai Y."/>
            <person name="Isono Y."/>
            <person name="Nakamura Y."/>
            <person name="Nagahari K."/>
            <person name="Murakami K."/>
            <person name="Yasuda T."/>
            <person name="Iwayanagi T."/>
            <person name="Wagatsuma M."/>
            <person name="Shiratori A."/>
            <person name="Sudo H."/>
            <person name="Hosoiri T."/>
            <person name="Kaku Y."/>
            <person name="Kodaira H."/>
            <person name="Kondo H."/>
            <person name="Sugawara M."/>
            <person name="Takahashi M."/>
            <person name="Kanda K."/>
            <person name="Yokoi T."/>
            <person name="Furuya T."/>
            <person name="Kikkawa E."/>
            <person name="Omura Y."/>
            <person name="Abe K."/>
            <person name="Kamihara K."/>
            <person name="Katsuta N."/>
            <person name="Sato K."/>
            <person name="Tanikawa M."/>
            <person name="Yamazaki M."/>
            <person name="Ninomiya K."/>
            <person name="Ishibashi T."/>
            <person name="Yamashita H."/>
            <person name="Murakawa K."/>
            <person name="Fujimori K."/>
            <person name="Tanai H."/>
            <person name="Kimata M."/>
            <person name="Watanabe M."/>
            <person name="Hiraoka S."/>
            <person name="Chiba Y."/>
            <person name="Ishida S."/>
            <person name="Ono Y."/>
            <person name="Takiguchi S."/>
            <person name="Watanabe S."/>
            <person name="Yosida M."/>
            <person name="Hotuta T."/>
            <person name="Kusano J."/>
            <person name="Kanehori K."/>
            <person name="Takahashi-Fujii A."/>
            <person name="Hara H."/>
            <person name="Tanase T.-O."/>
            <person name="Nomura Y."/>
            <person name="Togiya S."/>
            <person name="Komai F."/>
            <person name="Hara R."/>
            <person name="Takeuchi K."/>
            <person name="Arita M."/>
            <person name="Imose N."/>
            <person name="Musashino K."/>
            <person name="Yuuki H."/>
            <person name="Oshima A."/>
            <person name="Sasaki N."/>
            <person name="Aotsuka S."/>
            <person name="Yoshikawa Y."/>
            <person name="Matsunawa H."/>
            <person name="Ichihara T."/>
            <person name="Shiohata N."/>
            <person name="Sano S."/>
            <person name="Moriya S."/>
            <person name="Momiyama H."/>
            <person name="Satoh N."/>
            <person name="Takami S."/>
            <person name="Terashima Y."/>
            <person name="Suzuki O."/>
            <person name="Nakagawa S."/>
            <person name="Senoh A."/>
            <person name="Mizoguchi H."/>
            <person name="Goto Y."/>
            <person name="Shimizu F."/>
            <person name="Wakebe H."/>
            <person name="Hishigaki H."/>
            <person name="Watanabe T."/>
            <person name="Sugiyama A."/>
            <person name="Takemoto M."/>
            <person name="Kawakami B."/>
            <person name="Yamazaki M."/>
            <person name="Watanabe K."/>
            <person name="Kumagai A."/>
            <person name="Itakura S."/>
            <person name="Fukuzumi Y."/>
            <person name="Fujimori Y."/>
            <person name="Komiyama M."/>
            <person name="Tashiro H."/>
            <person name="Tanigami A."/>
            <person name="Fujiwara T."/>
            <person name="Ono T."/>
            <person name="Yamada K."/>
            <person name="Fujii Y."/>
            <person name="Ozaki K."/>
            <person name="Hirao M."/>
            <person name="Ohmori Y."/>
            <person name="Kawabata A."/>
            <person name="Hikiji T."/>
            <person name="Kobatake N."/>
            <person name="Inagaki H."/>
            <person name="Ikema Y."/>
            <person name="Okamoto S."/>
            <person name="Okitani R."/>
            <person name="Kawakami T."/>
            <person name="Noguchi S."/>
            <person name="Itoh T."/>
            <person name="Shigeta K."/>
            <person name="Senba T."/>
            <person name="Matsumura K."/>
            <person name="Nakajima Y."/>
            <person name="Mizuno T."/>
            <person name="Morinaga M."/>
            <person name="Sasaki M."/>
            <person name="Togashi T."/>
            <person name="Oyama M."/>
            <person name="Hata H."/>
            <person name="Watanabe M."/>
            <person name="Komatsu T."/>
            <person name="Mizushima-Sugano J."/>
            <person name="Satoh T."/>
            <person name="Shirai Y."/>
            <person name="Takahashi Y."/>
            <person name="Nakagawa K."/>
            <person name="Okumura K."/>
            <person name="Nagase T."/>
            <person name="Nomura N."/>
            <person name="Kikuchi H."/>
            <person name="Masuho Y."/>
            <person name="Yamashita R."/>
            <person name="Nakai K."/>
            <person name="Yada T."/>
            <person name="Nakamura Y."/>
            <person name="Ohara O."/>
            <person name="Isogai T."/>
            <person name="Sugano S."/>
        </authorList>
    </citation>
    <scope>NUCLEOTIDE SEQUENCE [LARGE SCALE MRNA] (ISOFORMS 1 AND 2)</scope>
    <source>
        <tissue>Esophagus</tissue>
        <tissue>Mammary gland</tissue>
    </source>
</reference>
<reference key="4">
    <citation type="journal article" date="2004" name="Nature">
        <title>The DNA sequence and comparative analysis of human chromosome 10.</title>
        <authorList>
            <person name="Deloukas P."/>
            <person name="Earthrowl M.E."/>
            <person name="Grafham D.V."/>
            <person name="Rubenfield M."/>
            <person name="French L."/>
            <person name="Steward C.A."/>
            <person name="Sims S.K."/>
            <person name="Jones M.C."/>
            <person name="Searle S."/>
            <person name="Scott C."/>
            <person name="Howe K."/>
            <person name="Hunt S.E."/>
            <person name="Andrews T.D."/>
            <person name="Gilbert J.G.R."/>
            <person name="Swarbreck D."/>
            <person name="Ashurst J.L."/>
            <person name="Taylor A."/>
            <person name="Battles J."/>
            <person name="Bird C.P."/>
            <person name="Ainscough R."/>
            <person name="Almeida J.P."/>
            <person name="Ashwell R.I.S."/>
            <person name="Ambrose K.D."/>
            <person name="Babbage A.K."/>
            <person name="Bagguley C.L."/>
            <person name="Bailey J."/>
            <person name="Banerjee R."/>
            <person name="Bates K."/>
            <person name="Beasley H."/>
            <person name="Bray-Allen S."/>
            <person name="Brown A.J."/>
            <person name="Brown J.Y."/>
            <person name="Burford D.C."/>
            <person name="Burrill W."/>
            <person name="Burton J."/>
            <person name="Cahill P."/>
            <person name="Camire D."/>
            <person name="Carter N.P."/>
            <person name="Chapman J.C."/>
            <person name="Clark S.Y."/>
            <person name="Clarke G."/>
            <person name="Clee C.M."/>
            <person name="Clegg S."/>
            <person name="Corby N."/>
            <person name="Coulson A."/>
            <person name="Dhami P."/>
            <person name="Dutta I."/>
            <person name="Dunn M."/>
            <person name="Faulkner L."/>
            <person name="Frankish A."/>
            <person name="Frankland J.A."/>
            <person name="Garner P."/>
            <person name="Garnett J."/>
            <person name="Gribble S."/>
            <person name="Griffiths C."/>
            <person name="Grocock R."/>
            <person name="Gustafson E."/>
            <person name="Hammond S."/>
            <person name="Harley J.L."/>
            <person name="Hart E."/>
            <person name="Heath P.D."/>
            <person name="Ho T.P."/>
            <person name="Hopkins B."/>
            <person name="Horne J."/>
            <person name="Howden P.J."/>
            <person name="Huckle E."/>
            <person name="Hynds C."/>
            <person name="Johnson C."/>
            <person name="Johnson D."/>
            <person name="Kana A."/>
            <person name="Kay M."/>
            <person name="Kimberley A.M."/>
            <person name="Kershaw J.K."/>
            <person name="Kokkinaki M."/>
            <person name="Laird G.K."/>
            <person name="Lawlor S."/>
            <person name="Lee H.M."/>
            <person name="Leongamornlert D.A."/>
            <person name="Laird G."/>
            <person name="Lloyd C."/>
            <person name="Lloyd D.M."/>
            <person name="Loveland J."/>
            <person name="Lovell J."/>
            <person name="McLaren S."/>
            <person name="McLay K.E."/>
            <person name="McMurray A."/>
            <person name="Mashreghi-Mohammadi M."/>
            <person name="Matthews L."/>
            <person name="Milne S."/>
            <person name="Nickerson T."/>
            <person name="Nguyen M."/>
            <person name="Overton-Larty E."/>
            <person name="Palmer S.A."/>
            <person name="Pearce A.V."/>
            <person name="Peck A.I."/>
            <person name="Pelan S."/>
            <person name="Phillimore B."/>
            <person name="Porter K."/>
            <person name="Rice C.M."/>
            <person name="Rogosin A."/>
            <person name="Ross M.T."/>
            <person name="Sarafidou T."/>
            <person name="Sehra H.K."/>
            <person name="Shownkeen R."/>
            <person name="Skuce C.D."/>
            <person name="Smith M."/>
            <person name="Standring L."/>
            <person name="Sycamore N."/>
            <person name="Tester J."/>
            <person name="Thorpe A."/>
            <person name="Torcasso W."/>
            <person name="Tracey A."/>
            <person name="Tromans A."/>
            <person name="Tsolas J."/>
            <person name="Wall M."/>
            <person name="Walsh J."/>
            <person name="Wang H."/>
            <person name="Weinstock K."/>
            <person name="West A.P."/>
            <person name="Willey D.L."/>
            <person name="Whitehead S.L."/>
            <person name="Wilming L."/>
            <person name="Wray P.W."/>
            <person name="Young L."/>
            <person name="Chen Y."/>
            <person name="Lovering R.C."/>
            <person name="Moschonas N.K."/>
            <person name="Siebert R."/>
            <person name="Fechtel K."/>
            <person name="Bentley D."/>
            <person name="Durbin R.M."/>
            <person name="Hubbard T."/>
            <person name="Doucette-Stamm L."/>
            <person name="Beck S."/>
            <person name="Smith D.R."/>
            <person name="Rogers J."/>
        </authorList>
    </citation>
    <scope>NUCLEOTIDE SEQUENCE [LARGE SCALE GENOMIC DNA]</scope>
</reference>
<reference key="5">
    <citation type="submission" date="2005-09" db="EMBL/GenBank/DDBJ databases">
        <authorList>
            <person name="Mural R.J."/>
            <person name="Istrail S."/>
            <person name="Sutton G."/>
            <person name="Florea L."/>
            <person name="Halpern A.L."/>
            <person name="Mobarry C.M."/>
            <person name="Lippert R."/>
            <person name="Walenz B."/>
            <person name="Shatkay H."/>
            <person name="Dew I."/>
            <person name="Miller J.R."/>
            <person name="Flanigan M.J."/>
            <person name="Edwards N.J."/>
            <person name="Bolanos R."/>
            <person name="Fasulo D."/>
            <person name="Halldorsson B.V."/>
            <person name="Hannenhalli S."/>
            <person name="Turner R."/>
            <person name="Yooseph S."/>
            <person name="Lu F."/>
            <person name="Nusskern D.R."/>
            <person name="Shue B.C."/>
            <person name="Zheng X.H."/>
            <person name="Zhong F."/>
            <person name="Delcher A.L."/>
            <person name="Huson D.H."/>
            <person name="Kravitz S.A."/>
            <person name="Mouchard L."/>
            <person name="Reinert K."/>
            <person name="Remington K.A."/>
            <person name="Clark A.G."/>
            <person name="Waterman M.S."/>
            <person name="Eichler E.E."/>
            <person name="Adams M.D."/>
            <person name="Hunkapiller M.W."/>
            <person name="Myers E.W."/>
            <person name="Venter J.C."/>
        </authorList>
    </citation>
    <scope>NUCLEOTIDE SEQUENCE [LARGE SCALE GENOMIC DNA]</scope>
</reference>
<reference key="6">
    <citation type="journal article" date="2004" name="Genome Res.">
        <title>The status, quality, and expansion of the NIH full-length cDNA project: the Mammalian Gene Collection (MGC).</title>
        <authorList>
            <consortium name="The MGC Project Team"/>
        </authorList>
    </citation>
    <scope>NUCLEOTIDE SEQUENCE [LARGE SCALE MRNA] (ISOFORM 1)</scope>
    <scope>VARIANT LYS-13</scope>
    <source>
        <tissue>Mammary gland</tissue>
    </source>
</reference>
<reference key="7">
    <citation type="journal article" date="2007" name="BMC Genomics">
        <title>The full-ORF clone resource of the German cDNA consortium.</title>
        <authorList>
            <person name="Bechtel S."/>
            <person name="Rosenfelder H."/>
            <person name="Duda A."/>
            <person name="Schmidt C.P."/>
            <person name="Ernst U."/>
            <person name="Wellenreuther R."/>
            <person name="Mehrle A."/>
            <person name="Schuster C."/>
            <person name="Bahr A."/>
            <person name="Bloecker H."/>
            <person name="Heubner D."/>
            <person name="Hoerlein A."/>
            <person name="Michel G."/>
            <person name="Wedler H."/>
            <person name="Koehrer K."/>
            <person name="Ottenwaelder B."/>
            <person name="Poustka A."/>
            <person name="Wiemann S."/>
            <person name="Schupp I."/>
        </authorList>
    </citation>
    <scope>NUCLEOTIDE SEQUENCE [LARGE SCALE MRNA] OF 6-432 (ISOFORM 1)</scope>
    <scope>VARIANTS LYS-13 AND VAL-316</scope>
    <source>
        <tissue>Skeletal muscle</tissue>
    </source>
</reference>
<reference key="8">
    <citation type="journal article" date="1996" name="Arch. Biochem. Biophys.">
        <title>Cloning of a cDNA for short/branched chain acyl-Coenzyme A dehydrogenase from rat and characterization of its tissue expression and substrate specificity.</title>
        <authorList>
            <person name="Willard J."/>
            <person name="Vicanek C."/>
            <person name="Battaile K.P."/>
            <person name="van Veldhoven P.P."/>
            <person name="Fauq A.H."/>
            <person name="Rozen R."/>
            <person name="Vockley J."/>
        </authorList>
    </citation>
    <scope>FUNCTION</scope>
    <scope>CATALYTIC ACTIVITY</scope>
    <scope>TISSUE SPECIFICITY</scope>
</reference>
<reference key="9">
    <citation type="journal article" date="2003" name="J. Biol. Chem.">
        <title>A novel approach to the characterization of substrate specificity in short/branched chain Acyl-CoA dehydrogenase.</title>
        <authorList>
            <person name="He M."/>
            <person name="Burghardt T.P."/>
            <person name="Vockley J."/>
        </authorList>
    </citation>
    <scope>CATALYTIC ACTIVITY</scope>
    <scope>BIOPHYSICOCHEMICAL PROPERTIES</scope>
    <scope>MUTAGENESIS OF VAL-137; PHE-138; SER-210 AND ALA-416</scope>
</reference>
<reference key="10">
    <citation type="journal article" date="2009" name="Science">
        <title>Lysine acetylation targets protein complexes and co-regulates major cellular functions.</title>
        <authorList>
            <person name="Choudhary C."/>
            <person name="Kumar C."/>
            <person name="Gnad F."/>
            <person name="Nielsen M.L."/>
            <person name="Rehman M."/>
            <person name="Walther T.C."/>
            <person name="Olsen J.V."/>
            <person name="Mann M."/>
        </authorList>
    </citation>
    <scope>ACETYLATION [LARGE SCALE ANALYSIS] AT LYS-284</scope>
    <scope>IDENTIFICATION BY MASS SPECTROMETRY [LARGE SCALE ANALYSIS]</scope>
</reference>
<reference key="11">
    <citation type="journal article" date="2011" name="BMC Syst. Biol.">
        <title>Initial characterization of the human central proteome.</title>
        <authorList>
            <person name="Burkard T.R."/>
            <person name="Planyavsky M."/>
            <person name="Kaupe I."/>
            <person name="Breitwieser F.P."/>
            <person name="Buerckstuemmer T."/>
            <person name="Bennett K.L."/>
            <person name="Superti-Furga G."/>
            <person name="Colinge J."/>
        </authorList>
    </citation>
    <scope>IDENTIFICATION BY MASS SPECTROMETRY [LARGE SCALE ANALYSIS]</scope>
</reference>
<reference key="12">
    <citation type="journal article" date="2011" name="Drug Metab. Dispos.">
        <title>Role of isovaleryl-CoA dehydrogenase and short branched-chain acyl-CoA dehydrogenase in the metabolism of valproic acid: implications for the branched-chain amino acid oxidation pathway.</title>
        <authorList>
            <person name="Luis P.B."/>
            <person name="Ruiter J.P."/>
            <person name="Ijlst L."/>
            <person name="Tavares de Almeida I."/>
            <person name="Duran M."/>
            <person name="Mohsen A.W."/>
            <person name="Vockley J."/>
            <person name="Wanders R.J."/>
            <person name="Silva M.F."/>
        </authorList>
    </citation>
    <scope>CATALYTIC ACTIVITY</scope>
    <scope>BIOPHYSICOCHEMICAL PROPERTIES</scope>
    <scope>ACTIVITY REGULATION</scope>
</reference>
<reference key="13">
    <citation type="journal article" date="2014" name="J. Proteomics">
        <title>An enzyme assisted RP-RPLC approach for in-depth analysis of human liver phosphoproteome.</title>
        <authorList>
            <person name="Bian Y."/>
            <person name="Song C."/>
            <person name="Cheng K."/>
            <person name="Dong M."/>
            <person name="Wang F."/>
            <person name="Huang J."/>
            <person name="Sun D."/>
            <person name="Wang L."/>
            <person name="Ye M."/>
            <person name="Zou H."/>
        </authorList>
    </citation>
    <scope>PHOSPHORYLATION [LARGE SCALE ANALYSIS] AT SER-183</scope>
    <scope>IDENTIFICATION BY MASS SPECTROMETRY [LARGE SCALE ANALYSIS]</scope>
    <source>
        <tissue>Liver</tissue>
    </source>
</reference>
<reference key="14">
    <citation type="journal article" date="2015" name="Proteomics">
        <title>N-terminome analysis of the human mitochondrial proteome.</title>
        <authorList>
            <person name="Vaca Jacome A.S."/>
            <person name="Rabilloud T."/>
            <person name="Schaeffer-Reiss C."/>
            <person name="Rompais M."/>
            <person name="Ayoub D."/>
            <person name="Lane L."/>
            <person name="Bairoch A."/>
            <person name="Van Dorsselaer A."/>
            <person name="Carapito C."/>
        </authorList>
    </citation>
    <scope>IDENTIFICATION BY MASS SPECTROMETRY [LARGE SCALE ANALYSIS]</scope>
</reference>
<reference key="15">
    <citation type="submission" date="2009-02" db="PDB data bank">
        <title>Crystal structure of human short-branched chain acyl-CoA dehydrogenase.</title>
        <authorList>
            <consortium name="Structural genomics consortium (SGC)"/>
        </authorList>
    </citation>
    <scope>X-RAY CRYSTALLOGRAPHY (2.0 ANGSTROMS) OF 52-432 IN COMPLEX WITH FAD AND SUBSTRATE ANALOG</scope>
    <scope>COFACTOR</scope>
    <scope>SUBUNIT</scope>
    <scope>ACTIVE SITE</scope>
</reference>
<reference key="16">
    <citation type="journal article" date="2000" name="Pediatr. Res.">
        <title>2-methylbutyryl-coenzyme A dehydrogenase deficiency: a new inborn error of L-isoleucine metabolism.</title>
        <authorList>
            <person name="Gibson K.M."/>
            <person name="Burlingame T.G."/>
            <person name="Hogema B."/>
            <person name="Jakobs C."/>
            <person name="Schutgens R.B.H."/>
            <person name="Millington D."/>
            <person name="Roe C.R."/>
            <person name="Roe D.S."/>
            <person name="Sweetman L."/>
            <person name="Steiner R.D."/>
            <person name="Linck L."/>
            <person name="Pohowalla P."/>
            <person name="Sacks M."/>
            <person name="Kiss D."/>
            <person name="Rinaldo P."/>
            <person name="Vockley J."/>
        </authorList>
    </citation>
    <scope>VARIANT SBCADD PHE-255</scope>
    <scope>CHARACTERIZATION OF VARIANT SBCADD PHE-255</scope>
    <scope>FUNCTION</scope>
    <scope>CATALYTIC ACTIVITY</scope>
</reference>
<reference key="17">
    <citation type="journal article" date="2006" name="Hum. Genet.">
        <title>Short/branched-chain acyl-CoA dehydrogenase deficiency due to an IVS3+3A&gt;G mutation that causes exon skipping.</title>
        <authorList>
            <person name="Madsen P.P."/>
            <person name="Kibaek M."/>
            <person name="Roca X."/>
            <person name="Sachidanandam R."/>
            <person name="Krainer A.R."/>
            <person name="Christensen E."/>
            <person name="Steiner R.D."/>
            <person name="Gibson K.M."/>
            <person name="Corydon T.J."/>
            <person name="Knudsen I."/>
            <person name="Wanders R.J."/>
            <person name="Ruiter J.P.N."/>
            <person name="Gregersen N."/>
            <person name="Andresen B.S."/>
        </authorList>
    </citation>
    <scope>VARIANT SBCADD PHE-255</scope>
</reference>
<dbReference type="EC" id="1.3.8.5" evidence="3 9"/>
<dbReference type="EMBL" id="U12778">
    <property type="protein sequence ID" value="AAA74424.1"/>
    <property type="molecule type" value="mRNA"/>
</dbReference>
<dbReference type="EMBL" id="AF260678">
    <property type="protein sequence ID" value="AAF97921.1"/>
    <property type="molecule type" value="Genomic_DNA"/>
</dbReference>
<dbReference type="EMBL" id="AF260668">
    <property type="protein sequence ID" value="AAF97921.1"/>
    <property type="status" value="JOINED"/>
    <property type="molecule type" value="Genomic_DNA"/>
</dbReference>
<dbReference type="EMBL" id="AF260669">
    <property type="protein sequence ID" value="AAF97921.1"/>
    <property type="status" value="JOINED"/>
    <property type="molecule type" value="Genomic_DNA"/>
</dbReference>
<dbReference type="EMBL" id="AF260670">
    <property type="protein sequence ID" value="AAF97921.1"/>
    <property type="status" value="JOINED"/>
    <property type="molecule type" value="Genomic_DNA"/>
</dbReference>
<dbReference type="EMBL" id="AF260671">
    <property type="protein sequence ID" value="AAF97921.1"/>
    <property type="status" value="JOINED"/>
    <property type="molecule type" value="Genomic_DNA"/>
</dbReference>
<dbReference type="EMBL" id="AF260672">
    <property type="protein sequence ID" value="AAF97921.1"/>
    <property type="status" value="JOINED"/>
    <property type="molecule type" value="Genomic_DNA"/>
</dbReference>
<dbReference type="EMBL" id="AF260673">
    <property type="protein sequence ID" value="AAF97921.1"/>
    <property type="status" value="JOINED"/>
    <property type="molecule type" value="Genomic_DNA"/>
</dbReference>
<dbReference type="EMBL" id="AF260674">
    <property type="protein sequence ID" value="AAF97921.1"/>
    <property type="status" value="JOINED"/>
    <property type="molecule type" value="Genomic_DNA"/>
</dbReference>
<dbReference type="EMBL" id="AF260675">
    <property type="protein sequence ID" value="AAF97921.1"/>
    <property type="status" value="JOINED"/>
    <property type="molecule type" value="Genomic_DNA"/>
</dbReference>
<dbReference type="EMBL" id="AF260676">
    <property type="protein sequence ID" value="AAF97921.1"/>
    <property type="status" value="JOINED"/>
    <property type="molecule type" value="Genomic_DNA"/>
</dbReference>
<dbReference type="EMBL" id="AF260677">
    <property type="protein sequence ID" value="AAF97921.1"/>
    <property type="status" value="JOINED"/>
    <property type="molecule type" value="Genomic_DNA"/>
</dbReference>
<dbReference type="EMBL" id="AK298638">
    <property type="protein sequence ID" value="BAG60813.1"/>
    <property type="molecule type" value="mRNA"/>
</dbReference>
<dbReference type="EMBL" id="AK314241">
    <property type="protein sequence ID" value="BAG36909.1"/>
    <property type="molecule type" value="mRNA"/>
</dbReference>
<dbReference type="EMBL" id="AC012391">
    <property type="status" value="NOT_ANNOTATED_CDS"/>
    <property type="molecule type" value="Genomic_DNA"/>
</dbReference>
<dbReference type="EMBL" id="AC073585">
    <property type="status" value="NOT_ANNOTATED_CDS"/>
    <property type="molecule type" value="Genomic_DNA"/>
</dbReference>
<dbReference type="EMBL" id="AL731666">
    <property type="status" value="NOT_ANNOTATED_CDS"/>
    <property type="molecule type" value="Genomic_DNA"/>
</dbReference>
<dbReference type="EMBL" id="CH471066">
    <property type="protein sequence ID" value="EAW49291.1"/>
    <property type="molecule type" value="Genomic_DNA"/>
</dbReference>
<dbReference type="EMBL" id="BC013756">
    <property type="protein sequence ID" value="AAH13756.1"/>
    <property type="molecule type" value="mRNA"/>
</dbReference>
<dbReference type="EMBL" id="AL831821">
    <property type="protein sequence ID" value="CAD38535.2"/>
    <property type="molecule type" value="mRNA"/>
</dbReference>
<dbReference type="CCDS" id="CCDS7634.1">
    <molecule id="P45954-1"/>
</dbReference>
<dbReference type="CCDS" id="CCDS81518.1">
    <molecule id="P45954-2"/>
</dbReference>
<dbReference type="PIR" id="A55680">
    <property type="entry name" value="A55680"/>
</dbReference>
<dbReference type="RefSeq" id="NP_001317103.1">
    <molecule id="P45954-2"/>
    <property type="nucleotide sequence ID" value="NM_001330174.3"/>
</dbReference>
<dbReference type="RefSeq" id="NP_001600.1">
    <molecule id="P45954-1"/>
    <property type="nucleotide sequence ID" value="NM_001609.4"/>
</dbReference>
<dbReference type="PDB" id="2JIF">
    <property type="method" value="X-ray"/>
    <property type="resolution" value="2.00 A"/>
    <property type="chains" value="A/B/C/D=52-432"/>
</dbReference>
<dbReference type="PDBsum" id="2JIF"/>
<dbReference type="SMR" id="P45954"/>
<dbReference type="BioGRID" id="106554">
    <property type="interactions" value="74"/>
</dbReference>
<dbReference type="FunCoup" id="P45954">
    <property type="interactions" value="1257"/>
</dbReference>
<dbReference type="IntAct" id="P45954">
    <property type="interactions" value="28"/>
</dbReference>
<dbReference type="MINT" id="P45954"/>
<dbReference type="STRING" id="9606.ENSP00000357873"/>
<dbReference type="DrugBank" id="DB00167">
    <property type="generic name" value="Isoleucine"/>
</dbReference>
<dbReference type="DrugBank" id="DB00313">
    <property type="generic name" value="Valproic acid"/>
</dbReference>
<dbReference type="SwissLipids" id="SLP:000001415"/>
<dbReference type="iPTMnet" id="P45954"/>
<dbReference type="PhosphoSitePlus" id="P45954"/>
<dbReference type="SwissPalm" id="P45954"/>
<dbReference type="BioMuta" id="ACADSB"/>
<dbReference type="DMDM" id="1168283"/>
<dbReference type="jPOST" id="P45954"/>
<dbReference type="MassIVE" id="P45954"/>
<dbReference type="PaxDb" id="9606-ENSP00000357873"/>
<dbReference type="PeptideAtlas" id="P45954"/>
<dbReference type="ProteomicsDB" id="4844"/>
<dbReference type="ProteomicsDB" id="55690">
    <molecule id="P45954-1"/>
</dbReference>
<dbReference type="Pumba" id="P45954"/>
<dbReference type="Antibodypedia" id="19074">
    <property type="antibodies" value="154 antibodies from 31 providers"/>
</dbReference>
<dbReference type="DNASU" id="36"/>
<dbReference type="Ensembl" id="ENST00000358776.7">
    <molecule id="P45954-1"/>
    <property type="protein sequence ID" value="ENSP00000357873.3"/>
    <property type="gene ID" value="ENSG00000196177.13"/>
</dbReference>
<dbReference type="Ensembl" id="ENST00000368869.8">
    <molecule id="P45954-2"/>
    <property type="protein sequence ID" value="ENSP00000357862.4"/>
    <property type="gene ID" value="ENSG00000196177.13"/>
</dbReference>
<dbReference type="GeneID" id="36"/>
<dbReference type="KEGG" id="hsa:36"/>
<dbReference type="MANE-Select" id="ENST00000358776.7">
    <property type="protein sequence ID" value="ENSP00000357873.3"/>
    <property type="RefSeq nucleotide sequence ID" value="NM_001609.4"/>
    <property type="RefSeq protein sequence ID" value="NP_001600.1"/>
</dbReference>
<dbReference type="UCSC" id="uc001lhb.4">
    <molecule id="P45954-1"/>
    <property type="organism name" value="human"/>
</dbReference>
<dbReference type="AGR" id="HGNC:91"/>
<dbReference type="CTD" id="36"/>
<dbReference type="DisGeNET" id="36"/>
<dbReference type="GeneCards" id="ACADSB"/>
<dbReference type="HGNC" id="HGNC:91">
    <property type="gene designation" value="ACADSB"/>
</dbReference>
<dbReference type="HPA" id="ENSG00000196177">
    <property type="expression patterns" value="Tissue enriched (liver)"/>
</dbReference>
<dbReference type="MalaCards" id="ACADSB"/>
<dbReference type="MIM" id="600301">
    <property type="type" value="gene"/>
</dbReference>
<dbReference type="MIM" id="610006">
    <property type="type" value="phenotype"/>
</dbReference>
<dbReference type="neXtProt" id="NX_P45954"/>
<dbReference type="OpenTargets" id="ENSG00000196177"/>
<dbReference type="Orphanet" id="79157">
    <property type="disease" value="2-methylbutyryl-CoA dehydrogenase deficiency"/>
</dbReference>
<dbReference type="PharmGKB" id="PA24427"/>
<dbReference type="VEuPathDB" id="HostDB:ENSG00000196177"/>
<dbReference type="eggNOG" id="KOG0139">
    <property type="taxonomic scope" value="Eukaryota"/>
</dbReference>
<dbReference type="GeneTree" id="ENSGT00940000156525"/>
<dbReference type="HOGENOM" id="CLU_018204_0_0_1"/>
<dbReference type="InParanoid" id="P45954"/>
<dbReference type="OMA" id="DAMFSYC"/>
<dbReference type="OrthoDB" id="10262177at2759"/>
<dbReference type="PAN-GO" id="P45954">
    <property type="GO annotations" value="2 GO annotations based on evolutionary models"/>
</dbReference>
<dbReference type="PhylomeDB" id="P45954"/>
<dbReference type="TreeFam" id="TF105055"/>
<dbReference type="BioCyc" id="MetaCyc:HS10828-MONOMER"/>
<dbReference type="PathwayCommons" id="P45954"/>
<dbReference type="Reactome" id="R-HSA-70895">
    <property type="pathway name" value="Branched-chain amino acid catabolism"/>
</dbReference>
<dbReference type="Reactome" id="R-HSA-9837999">
    <property type="pathway name" value="Mitochondrial protein degradation"/>
</dbReference>
<dbReference type="SignaLink" id="P45954"/>
<dbReference type="UniPathway" id="UPA00364"/>
<dbReference type="UniPathway" id="UPA00660"/>
<dbReference type="BioGRID-ORCS" id="36">
    <property type="hits" value="11 hits in 1154 CRISPR screens"/>
</dbReference>
<dbReference type="ChiTaRS" id="ACADSB">
    <property type="organism name" value="human"/>
</dbReference>
<dbReference type="EvolutionaryTrace" id="P45954"/>
<dbReference type="GenomeRNAi" id="36"/>
<dbReference type="Pharos" id="P45954">
    <property type="development level" value="Tbio"/>
</dbReference>
<dbReference type="PRO" id="PR:P45954"/>
<dbReference type="Proteomes" id="UP000005640">
    <property type="component" value="Chromosome 10"/>
</dbReference>
<dbReference type="RNAct" id="P45954">
    <property type="molecule type" value="protein"/>
</dbReference>
<dbReference type="Bgee" id="ENSG00000196177">
    <property type="expression patterns" value="Expressed in right lobe of liver and 195 other cell types or tissues"/>
</dbReference>
<dbReference type="ExpressionAtlas" id="P45954">
    <property type="expression patterns" value="baseline and differential"/>
</dbReference>
<dbReference type="GO" id="GO:0005759">
    <property type="term" value="C:mitochondrial matrix"/>
    <property type="evidence" value="ECO:0000304"/>
    <property type="project" value="Reactome"/>
</dbReference>
<dbReference type="GO" id="GO:0005739">
    <property type="term" value="C:mitochondrion"/>
    <property type="evidence" value="ECO:0000314"/>
    <property type="project" value="HPA"/>
</dbReference>
<dbReference type="GO" id="GO:0003995">
    <property type="term" value="F:acyl-CoA dehydrogenase activity"/>
    <property type="evidence" value="ECO:0000318"/>
    <property type="project" value="GO_Central"/>
</dbReference>
<dbReference type="GO" id="GO:0050660">
    <property type="term" value="F:flavin adenine dinucleotide binding"/>
    <property type="evidence" value="ECO:0007669"/>
    <property type="project" value="InterPro"/>
</dbReference>
<dbReference type="GO" id="GO:0042802">
    <property type="term" value="F:identical protein binding"/>
    <property type="evidence" value="ECO:0000314"/>
    <property type="project" value="UniProtKB"/>
</dbReference>
<dbReference type="GO" id="GO:0003853">
    <property type="term" value="F:short-chain 2-methyl fatty acyl-CoA dehydrogenase activity"/>
    <property type="evidence" value="ECO:0000314"/>
    <property type="project" value="UniProtKB"/>
</dbReference>
<dbReference type="GO" id="GO:0016937">
    <property type="term" value="F:short-chain fatty acyl-CoA dehydrogenase activity"/>
    <property type="evidence" value="ECO:0000314"/>
    <property type="project" value="UniProtKB"/>
</dbReference>
<dbReference type="GO" id="GO:0006631">
    <property type="term" value="P:fatty acid metabolic process"/>
    <property type="evidence" value="ECO:0000314"/>
    <property type="project" value="UniProtKB"/>
</dbReference>
<dbReference type="GO" id="GO:0006550">
    <property type="term" value="P:isoleucine catabolic process"/>
    <property type="evidence" value="ECO:0000315"/>
    <property type="project" value="UniProtKB"/>
</dbReference>
<dbReference type="CDD" id="cd01158">
    <property type="entry name" value="SCAD_SBCAD"/>
    <property type="match status" value="1"/>
</dbReference>
<dbReference type="FunFam" id="1.10.540.10:FF:000012">
    <property type="entry name" value="Acyl-CoA dehydrogenase short/branched chain"/>
    <property type="match status" value="1"/>
</dbReference>
<dbReference type="FunFam" id="1.20.140.10:FF:000002">
    <property type="entry name" value="Acyl-CoA dehydrogenase short/branched chain"/>
    <property type="match status" value="1"/>
</dbReference>
<dbReference type="FunFam" id="2.40.110.10:FF:000001">
    <property type="entry name" value="Acyl-CoA dehydrogenase, mitochondrial"/>
    <property type="match status" value="1"/>
</dbReference>
<dbReference type="Gene3D" id="1.10.540.10">
    <property type="entry name" value="Acyl-CoA dehydrogenase/oxidase, N-terminal domain"/>
    <property type="match status" value="1"/>
</dbReference>
<dbReference type="Gene3D" id="2.40.110.10">
    <property type="entry name" value="Butyryl-CoA Dehydrogenase, subunit A, domain 2"/>
    <property type="match status" value="1"/>
</dbReference>
<dbReference type="Gene3D" id="1.20.140.10">
    <property type="entry name" value="Butyryl-CoA Dehydrogenase, subunit A, domain 3"/>
    <property type="match status" value="1"/>
</dbReference>
<dbReference type="InterPro" id="IPR006089">
    <property type="entry name" value="Acyl-CoA_DH_CS"/>
</dbReference>
<dbReference type="InterPro" id="IPR006091">
    <property type="entry name" value="Acyl-CoA_Oxase/DH_mid-dom"/>
</dbReference>
<dbReference type="InterPro" id="IPR046373">
    <property type="entry name" value="Acyl-CoA_Oxase/DH_mid-dom_sf"/>
</dbReference>
<dbReference type="InterPro" id="IPR036250">
    <property type="entry name" value="AcylCo_DH-like_C"/>
</dbReference>
<dbReference type="InterPro" id="IPR009075">
    <property type="entry name" value="AcylCo_DH/oxidase_C"/>
</dbReference>
<dbReference type="InterPro" id="IPR013786">
    <property type="entry name" value="AcylCoA_DH/ox_N"/>
</dbReference>
<dbReference type="InterPro" id="IPR037069">
    <property type="entry name" value="AcylCoA_DH/ox_N_sf"/>
</dbReference>
<dbReference type="InterPro" id="IPR009100">
    <property type="entry name" value="AcylCoA_DH/oxidase_NM_dom_sf"/>
</dbReference>
<dbReference type="PANTHER" id="PTHR43884">
    <property type="entry name" value="ACYL-COA DEHYDROGENASE"/>
    <property type="match status" value="1"/>
</dbReference>
<dbReference type="PANTHER" id="PTHR43884:SF1">
    <property type="entry name" value="SHORT_BRANCHED CHAIN SPECIFIC ACYL-COA DEHYDROGENASE, MITOCHONDRIAL"/>
    <property type="match status" value="1"/>
</dbReference>
<dbReference type="Pfam" id="PF00441">
    <property type="entry name" value="Acyl-CoA_dh_1"/>
    <property type="match status" value="1"/>
</dbReference>
<dbReference type="Pfam" id="PF02770">
    <property type="entry name" value="Acyl-CoA_dh_M"/>
    <property type="match status" value="1"/>
</dbReference>
<dbReference type="Pfam" id="PF02771">
    <property type="entry name" value="Acyl-CoA_dh_N"/>
    <property type="match status" value="1"/>
</dbReference>
<dbReference type="SUPFAM" id="SSF47203">
    <property type="entry name" value="Acyl-CoA dehydrogenase C-terminal domain-like"/>
    <property type="match status" value="1"/>
</dbReference>
<dbReference type="SUPFAM" id="SSF56645">
    <property type="entry name" value="Acyl-CoA dehydrogenase NM domain-like"/>
    <property type="match status" value="1"/>
</dbReference>
<dbReference type="PROSITE" id="PS00072">
    <property type="entry name" value="ACYL_COA_DH_1"/>
    <property type="match status" value="1"/>
</dbReference>
<dbReference type="PROSITE" id="PS00073">
    <property type="entry name" value="ACYL_COA_DH_2"/>
    <property type="match status" value="1"/>
</dbReference>
<comment type="function">
    <text evidence="3 4 9 10 11">Short and branched chain specific acyl-CoA dehydrogenase that catalyzes the removal of one hydrogen from C-2 and C-3 of the fatty acyl-CoA thioester, resulting in the formation of trans-2-enoyl-CoA (PubMed:10832746, PubMed:11013134, PubMed:21430231, PubMed:7698750). Among the different mitochondrial acyl-CoA dehydrogenases, acts specifically on short and branched chain acyl-CoA derivatives such as (S)-2-methylbutyryl-CoA as well as short straight chain acyl-CoAs such as butyryl-CoA (PubMed:10832746, PubMed:11013134, PubMed:21430231, PubMed:7698750). Plays an important role in the metabolism of L-isoleucine by catalyzing the dehydrogenation of 2-methylbutyryl-CoA, one of the steps of the L-isoleucine catabolic pathway (PubMed:10832746, PubMed:11013134). Can also act on valproyl-CoA, a metabolite of valproic acid, an antiepileptic drug (PubMed:8660691).</text>
</comment>
<comment type="catalytic activity">
    <reaction evidence="3 9">
        <text>2-methylbutanoyl-CoA + oxidized [electron-transfer flavoprotein] + H(+) = (2E)-2-methylbut-2-enoyl-CoA + reduced [electron-transfer flavoprotein]</text>
        <dbReference type="Rhea" id="RHEA:43780"/>
        <dbReference type="Rhea" id="RHEA-COMP:10685"/>
        <dbReference type="Rhea" id="RHEA-COMP:10686"/>
        <dbReference type="ChEBI" id="CHEBI:15378"/>
        <dbReference type="ChEBI" id="CHEBI:57336"/>
        <dbReference type="ChEBI" id="CHEBI:57337"/>
        <dbReference type="ChEBI" id="CHEBI:57692"/>
        <dbReference type="ChEBI" id="CHEBI:58307"/>
        <dbReference type="EC" id="1.3.8.5"/>
    </reaction>
    <physiologicalReaction direction="left-to-right" evidence="3">
        <dbReference type="Rhea" id="RHEA:43781"/>
    </physiologicalReaction>
</comment>
<comment type="catalytic activity">
    <reaction evidence="4 5 10">
        <text>(2S)-2-methylbutanoyl-CoA + oxidized [electron-transfer flavoprotein] + H(+) = (2E)-2-methylbut-2-enoyl-CoA + reduced [electron-transfer flavoprotein]</text>
        <dbReference type="Rhea" id="RHEA:48256"/>
        <dbReference type="Rhea" id="RHEA-COMP:10685"/>
        <dbReference type="Rhea" id="RHEA-COMP:10686"/>
        <dbReference type="ChEBI" id="CHEBI:15378"/>
        <dbReference type="ChEBI" id="CHEBI:57337"/>
        <dbReference type="ChEBI" id="CHEBI:57692"/>
        <dbReference type="ChEBI" id="CHEBI:58307"/>
        <dbReference type="ChEBI" id="CHEBI:88166"/>
    </reaction>
    <physiologicalReaction direction="left-to-right" evidence="17">
        <dbReference type="Rhea" id="RHEA:48257"/>
    </physiologicalReaction>
</comment>
<comment type="catalytic activity">
    <reaction evidence="1">
        <text>(2R)-2-methylbutanoyl-CoA + oxidized [electron-transfer flavoprotein] + H(+) = ethylacryloyl-CoA + reduced [electron-transfer flavoprotein]</text>
        <dbReference type="Rhea" id="RHEA:65296"/>
        <dbReference type="Rhea" id="RHEA-COMP:10685"/>
        <dbReference type="Rhea" id="RHEA-COMP:10686"/>
        <dbReference type="ChEBI" id="CHEBI:15378"/>
        <dbReference type="ChEBI" id="CHEBI:57692"/>
        <dbReference type="ChEBI" id="CHEBI:58307"/>
        <dbReference type="ChEBI" id="CHEBI:156439"/>
        <dbReference type="ChEBI" id="CHEBI:156440"/>
    </reaction>
    <physiologicalReaction direction="left-to-right" evidence="1">
        <dbReference type="Rhea" id="RHEA:65297"/>
    </physiologicalReaction>
</comment>
<comment type="catalytic activity">
    <reaction evidence="10">
        <text>butanoyl-CoA + oxidized [electron-transfer flavoprotein] + H(+) = (2E)-butenoyl-CoA + reduced [electron-transfer flavoprotein]</text>
        <dbReference type="Rhea" id="RHEA:24004"/>
        <dbReference type="Rhea" id="RHEA-COMP:10685"/>
        <dbReference type="Rhea" id="RHEA-COMP:10686"/>
        <dbReference type="ChEBI" id="CHEBI:15378"/>
        <dbReference type="ChEBI" id="CHEBI:57332"/>
        <dbReference type="ChEBI" id="CHEBI:57371"/>
        <dbReference type="ChEBI" id="CHEBI:57692"/>
        <dbReference type="ChEBI" id="CHEBI:58307"/>
    </reaction>
    <physiologicalReaction direction="left-to-right" evidence="17">
        <dbReference type="Rhea" id="RHEA:24005"/>
    </physiologicalReaction>
</comment>
<comment type="catalytic activity">
    <reaction evidence="10">
        <text>2-methylpropanoyl-CoA + oxidized [electron-transfer flavoprotein] + H(+) = 2-methylpropenoyl-CoA + reduced [electron-transfer flavoprotein]</text>
        <dbReference type="Rhea" id="RHEA:44180"/>
        <dbReference type="Rhea" id="RHEA-COMP:10685"/>
        <dbReference type="Rhea" id="RHEA-COMP:10686"/>
        <dbReference type="ChEBI" id="CHEBI:15378"/>
        <dbReference type="ChEBI" id="CHEBI:57338"/>
        <dbReference type="ChEBI" id="CHEBI:57692"/>
        <dbReference type="ChEBI" id="CHEBI:58307"/>
        <dbReference type="ChEBI" id="CHEBI:62500"/>
    </reaction>
    <physiologicalReaction direction="left-to-right" evidence="17">
        <dbReference type="Rhea" id="RHEA:44181"/>
    </physiologicalReaction>
</comment>
<comment type="catalytic activity">
    <reaction evidence="5 10">
        <text>hexanoyl-CoA + oxidized [electron-transfer flavoprotein] + H(+) = (2E)-hexenoyl-CoA + reduced [electron-transfer flavoprotein]</text>
        <dbReference type="Rhea" id="RHEA:43464"/>
        <dbReference type="Rhea" id="RHEA-COMP:10685"/>
        <dbReference type="Rhea" id="RHEA-COMP:10686"/>
        <dbReference type="ChEBI" id="CHEBI:15378"/>
        <dbReference type="ChEBI" id="CHEBI:57692"/>
        <dbReference type="ChEBI" id="CHEBI:58307"/>
        <dbReference type="ChEBI" id="CHEBI:62077"/>
        <dbReference type="ChEBI" id="CHEBI:62620"/>
    </reaction>
    <physiologicalReaction direction="left-to-right" evidence="17">
        <dbReference type="Rhea" id="RHEA:43465"/>
    </physiologicalReaction>
</comment>
<comment type="catalytic activity">
    <reaction evidence="10">
        <text>2-methylhexanoyl-CoA + oxidized [electron-transfer flavoprotein] + H(+) = 2-methylhexenoyl-CoA + reduced [electron-transfer flavoprotein]</text>
        <dbReference type="Rhea" id="RHEA:48272"/>
        <dbReference type="Rhea" id="RHEA-COMP:10685"/>
        <dbReference type="Rhea" id="RHEA-COMP:10686"/>
        <dbReference type="ChEBI" id="CHEBI:15378"/>
        <dbReference type="ChEBI" id="CHEBI:57692"/>
        <dbReference type="ChEBI" id="CHEBI:58307"/>
        <dbReference type="ChEBI" id="CHEBI:90156"/>
        <dbReference type="ChEBI" id="CHEBI:90157"/>
    </reaction>
    <physiologicalReaction direction="left-to-right" evidence="17">
        <dbReference type="Rhea" id="RHEA:48273"/>
    </physiologicalReaction>
</comment>
<comment type="catalytic activity">
    <reaction evidence="11">
        <text>valproyl-CoA + oxidized [electron-transfer flavoprotein] + H(+) = (2E)-2-propylpent-2-enoyl-CoA + reduced [electron-transfer flavoprotein]</text>
        <dbReference type="Rhea" id="RHEA:65344"/>
        <dbReference type="Rhea" id="RHEA-COMP:10685"/>
        <dbReference type="Rhea" id="RHEA-COMP:10686"/>
        <dbReference type="ChEBI" id="CHEBI:15378"/>
        <dbReference type="ChEBI" id="CHEBI:57692"/>
        <dbReference type="ChEBI" id="CHEBI:58307"/>
        <dbReference type="ChEBI" id="CHEBI:156457"/>
        <dbReference type="ChEBI" id="CHEBI:156458"/>
    </reaction>
    <physiologicalReaction direction="left-to-right" evidence="18">
        <dbReference type="Rhea" id="RHEA:65345"/>
    </physiologicalReaction>
</comment>
<comment type="cofactor">
    <cofactor evidence="12">
        <name>FAD</name>
        <dbReference type="ChEBI" id="CHEBI:57692"/>
    </cofactor>
</comment>
<comment type="activity regulation">
    <text evidence="9">Competitively inhibited by valproyl-CoA.</text>
</comment>
<comment type="biophysicochemical properties">
    <kinetics>
        <KM evidence="9">12 uM for 2-methylbutanoyl-CoA (at pH 8.0 and 37 degrees Celsius)</KM>
        <KM evidence="5">2.7 uM for (2S)-2-methylbutanoyl-CoA (at 32 degrees Celsius)</KM>
        <KM evidence="5">36 uM for hexanoyl-CoA (at 32 degrees Celsius)</KM>
        <KM evidence="5">130 uM for 2-methylpropanoyl-CoA (at 32 degrees Celsius)</KM>
        <Vmax evidence="9">12.0 umol/min/mg enzyme with 2-methylbutanoyl-CoA as substrate (at pH 8.0 and 37 degrees Celsius)</Vmax>
        <text evidence="5">kcat is 9700 sec(-1) for the dehydrogenation of (2S)-2-methylbutanoyl-CoA (PubMed:12855692). kcat is 7600 sec(-1) for the dehydrogenation of hexanoyl-CoA (PubMed:12855692). kcat is 2900 sec(-1) for the dehydrogenation of hexanoyl-CoA (PubMed:12855692).</text>
    </kinetics>
</comment>
<comment type="pathway">
    <text evidence="4">Lipid metabolism; mitochondrial fatty acid beta-oxidation.</text>
</comment>
<comment type="pathway">
    <text evidence="4">Amino-acid degradation; L-isoleucine degradation.</text>
</comment>
<comment type="subunit">
    <text evidence="4 12">Homotetramer.</text>
</comment>
<comment type="subcellular location">
    <subcellularLocation>
        <location evidence="16">Mitochondrion matrix</location>
    </subcellularLocation>
</comment>
<comment type="alternative products">
    <event type="alternative splicing"/>
    <isoform>
        <id>P45954-1</id>
        <name>1</name>
        <sequence type="displayed"/>
    </isoform>
    <isoform>
        <id>P45954-2</id>
        <name>2</name>
        <sequence type="described" ref="VSP_055778"/>
    </isoform>
</comment>
<comment type="tissue specificity">
    <text evidence="11">Ubiquitously expressed.</text>
</comment>
<comment type="disease" evidence="3 4 7">
    <disease id="DI-02302">
        <name>Short/branched-chain acyl-CoA dehydrogenase deficiency</name>
        <acronym>SBCADD</acronym>
        <description>Autosomal recessive disorder and consists of a defect in catabolism of L-isoleucine which is characterized by an increase of 2-methylbutyrylglycine and 2-methylbutyrylcarnitine in blood and urine. Affected individuals have seizures and psychomotor delay as the main clinical features.</description>
        <dbReference type="MIM" id="610006"/>
    </disease>
    <text>The disease is caused by variants affecting the gene represented in this entry.</text>
</comment>
<comment type="similarity">
    <text evidence="15">Belongs to the acyl-CoA dehydrogenase family.</text>
</comment>
<name>ACDSB_HUMAN</name>
<keyword id="KW-0002">3D-structure</keyword>
<keyword id="KW-0007">Acetylation</keyword>
<keyword id="KW-0025">Alternative splicing</keyword>
<keyword id="KW-0225">Disease variant</keyword>
<keyword id="KW-0274">FAD</keyword>
<keyword id="KW-0276">Fatty acid metabolism</keyword>
<keyword id="KW-0285">Flavoprotein</keyword>
<keyword id="KW-0443">Lipid metabolism</keyword>
<keyword id="KW-0496">Mitochondrion</keyword>
<keyword id="KW-0560">Oxidoreductase</keyword>
<keyword id="KW-0597">Phosphoprotein</keyword>
<keyword id="KW-1267">Proteomics identification</keyword>
<keyword id="KW-1185">Reference proteome</keyword>
<keyword id="KW-0809">Transit peptide</keyword>
<sequence>MEGLAVRLLRGSRLLRRNFLTCLSSWKIPPHVSKSSQSEALLNITNNGIHFAPLQTFTDEEMMIKSSVKKFAQEQIAPLVSTMDENSKMEKSVIQGLFQQGLMGIEVDPEYGGTGASFLSTVLVIEELAKVDASVAVFCEIQNTLINTLIRKHGTEEQKATYLPQLTTEKVGSFCLSEAGAGSDSFALKTRADKEGDYYVLNGSKMWISSAEHAGLFLVMANVDPTIGYKGITSFLVDRDTPGLHIGKPENKLGLRASSTCPLTFENVKVPEANILGQIGHGYKYAIGSLNEGRIGIAAQMLGLAQGCFDYTIPYIKERIQFGKRLFDFQGLQHQVAHVATQLEAARLLTYNAARLLEAGKPFIKEASMAKYYASEIAGQTTSKCIEWMGGVGYTKDYPVEKYFRDAKIGTIYEGASNIQLNTIAKHIDAEY</sequence>
<proteinExistence type="evidence at protein level"/>
<evidence type="ECO:0000250" key="1">
    <source>
        <dbReference type="UniProtKB" id="P70584"/>
    </source>
</evidence>
<evidence type="ECO:0000250" key="2">
    <source>
        <dbReference type="UniProtKB" id="Q9DBL1"/>
    </source>
</evidence>
<evidence type="ECO:0000269" key="3">
    <source>
    </source>
</evidence>
<evidence type="ECO:0000269" key="4">
    <source>
    </source>
</evidence>
<evidence type="ECO:0000269" key="5">
    <source>
    </source>
</evidence>
<evidence type="ECO:0000269" key="6">
    <source>
    </source>
</evidence>
<evidence type="ECO:0000269" key="7">
    <source>
    </source>
</evidence>
<evidence type="ECO:0000269" key="8">
    <source>
    </source>
</evidence>
<evidence type="ECO:0000269" key="9">
    <source>
    </source>
</evidence>
<evidence type="ECO:0000269" key="10">
    <source>
    </source>
</evidence>
<evidence type="ECO:0000269" key="11">
    <source>
    </source>
</evidence>
<evidence type="ECO:0000269" key="12">
    <source ref="15"/>
</evidence>
<evidence type="ECO:0000303" key="13">
    <source>
    </source>
</evidence>
<evidence type="ECO:0000303" key="14">
    <source>
    </source>
</evidence>
<evidence type="ECO:0000305" key="15"/>
<evidence type="ECO:0000305" key="16">
    <source>
    </source>
</evidence>
<evidence type="ECO:0000305" key="17">
    <source>
    </source>
</evidence>
<evidence type="ECO:0000305" key="18">
    <source>
    </source>
</evidence>
<evidence type="ECO:0000305" key="19">
    <source ref="15"/>
</evidence>
<evidence type="ECO:0000312" key="20">
    <source>
        <dbReference type="HGNC" id="HGNC:91"/>
    </source>
</evidence>
<evidence type="ECO:0007744" key="21">
    <source>
    </source>
</evidence>
<evidence type="ECO:0007744" key="22">
    <source>
    </source>
</evidence>
<evidence type="ECO:0007829" key="23">
    <source>
        <dbReference type="PDB" id="2JIF"/>
    </source>
</evidence>
<organism>
    <name type="scientific">Homo sapiens</name>
    <name type="common">Human</name>
    <dbReference type="NCBI Taxonomy" id="9606"/>
    <lineage>
        <taxon>Eukaryota</taxon>
        <taxon>Metazoa</taxon>
        <taxon>Chordata</taxon>
        <taxon>Craniata</taxon>
        <taxon>Vertebrata</taxon>
        <taxon>Euteleostomi</taxon>
        <taxon>Mammalia</taxon>
        <taxon>Eutheria</taxon>
        <taxon>Euarchontoglires</taxon>
        <taxon>Primates</taxon>
        <taxon>Haplorrhini</taxon>
        <taxon>Catarrhini</taxon>
        <taxon>Hominidae</taxon>
        <taxon>Homo</taxon>
    </lineage>
</organism>
<accession>P45954</accession>
<accession>B4DQ51</accession>
<accession>Q5SQN6</accession>
<accession>Q96CX7</accession>
<feature type="transit peptide" description="Mitochondrion" evidence="10">
    <location>
        <begin position="1"/>
        <end position="33"/>
    </location>
</feature>
<feature type="chain" id="PRO_0000000519" description="Short/branched chain specific acyl-CoA dehydrogenase, mitochondrial">
    <location>
        <begin position="34"/>
        <end position="432"/>
    </location>
</feature>
<feature type="active site" description="Proton acceptor" evidence="19">
    <location>
        <position position="414"/>
    </location>
</feature>
<feature type="binding site" description="in other chain" evidence="12">
    <location>
        <begin position="174"/>
        <end position="183"/>
    </location>
    <ligand>
        <name>FAD</name>
        <dbReference type="ChEBI" id="CHEBI:57692"/>
        <note>ligand shared between dimeric partners</note>
    </ligand>
</feature>
<feature type="binding site" evidence="12">
    <location>
        <position position="183"/>
    </location>
    <ligand>
        <name>substrate</name>
    </ligand>
</feature>
<feature type="binding site" description="in other chain" evidence="12">
    <location>
        <begin position="207"/>
        <end position="209"/>
    </location>
    <ligand>
        <name>FAD</name>
        <dbReference type="ChEBI" id="CHEBI:57692"/>
        <note>ligand shared between dimeric partners</note>
    </ligand>
</feature>
<feature type="binding site" evidence="12">
    <location>
        <position position="229"/>
    </location>
    <ligand>
        <name>substrate</name>
    </ligand>
</feature>
<feature type="binding site" evidence="12">
    <location>
        <position position="283"/>
    </location>
    <ligand>
        <name>substrate</name>
    </ligand>
</feature>
<feature type="binding site" evidence="12">
    <location>
        <begin position="291"/>
        <end position="294"/>
    </location>
    <ligand>
        <name>substrate</name>
    </ligand>
</feature>
<feature type="binding site" evidence="12">
    <location>
        <position position="319"/>
    </location>
    <ligand>
        <name>FAD</name>
        <dbReference type="ChEBI" id="CHEBI:57692"/>
        <note>ligand shared between dimeric partners</note>
    </ligand>
</feature>
<feature type="binding site" evidence="12">
    <location>
        <position position="330"/>
    </location>
    <ligand>
        <name>FAD</name>
        <dbReference type="ChEBI" id="CHEBI:57692"/>
        <note>ligand shared between dimeric partners</note>
    </ligand>
</feature>
<feature type="binding site" evidence="12">
    <location>
        <begin position="387"/>
        <end position="391"/>
    </location>
    <ligand>
        <name>FAD</name>
        <dbReference type="ChEBI" id="CHEBI:57692"/>
        <note>ligand shared between dimeric partners</note>
    </ligand>
</feature>
<feature type="binding site" description="in other chain" evidence="12">
    <location>
        <begin position="416"/>
        <end position="418"/>
    </location>
    <ligand>
        <name>FAD</name>
        <dbReference type="ChEBI" id="CHEBI:57692"/>
        <note>ligand shared between dimeric partners</note>
    </ligand>
</feature>
<feature type="modified residue" description="N6-acetyllysine; alternate" evidence="2">
    <location>
        <position position="70"/>
    </location>
</feature>
<feature type="modified residue" description="N6-succinyllysine; alternate" evidence="2">
    <location>
        <position position="70"/>
    </location>
</feature>
<feature type="modified residue" description="Phosphoserine" evidence="22">
    <location>
        <position position="183"/>
    </location>
</feature>
<feature type="modified residue" description="N6-acetyllysine; alternate" evidence="21">
    <location>
        <position position="284"/>
    </location>
</feature>
<feature type="modified residue" description="N6-succinyllysine; alternate" evidence="2">
    <location>
        <position position="284"/>
    </location>
</feature>
<feature type="modified residue" description="N6-acetyllysine" evidence="2">
    <location>
        <position position="426"/>
    </location>
</feature>
<feature type="splice variant" id="VSP_055778" description="In isoform 2." evidence="13">
    <location>
        <begin position="1"/>
        <end position="102"/>
    </location>
</feature>
<feature type="sequence variant" id="VAR_048177" description="In dbSNP:rs12263012." evidence="6 8">
    <original>R</original>
    <variation>K</variation>
    <location>
        <position position="13"/>
    </location>
</feature>
<feature type="sequence variant" id="VAR_014749" description="In dbSNP:rs1799823.">
    <original>S</original>
    <variation>G</variation>
    <location>
        <position position="209"/>
    </location>
</feature>
<feature type="sequence variant" id="VAR_013010" description="In SBCADD; loss of protein expression; loss of 2-methylbutyryl-CoA dehydrogenase activity; dbSNP:rs137852649." evidence="3 7">
    <original>L</original>
    <variation>F</variation>
    <location>
        <position position="255"/>
    </location>
</feature>
<feature type="sequence variant" id="VAR_048178" description="In dbSNP:rs1131430." evidence="8">
    <original>I</original>
    <variation>V</variation>
    <location>
        <position position="316"/>
    </location>
</feature>
<feature type="sequence variant" id="VAR_048179" description="In dbSNP:rs12357783.">
    <original>E</original>
    <variation>G</variation>
    <location>
        <position position="376"/>
    </location>
</feature>
<feature type="mutagenesis site" description="Decreased acyl-CoA dehydrogenase activity." evidence="5">
    <original>V</original>
    <variation>L</variation>
    <location>
        <position position="137"/>
    </location>
</feature>
<feature type="mutagenesis site" description="Increased acyl-CoA dehydrogenase activity. No effect on substrate specificity." evidence="5">
    <original>F</original>
    <variation>L</variation>
    <location>
        <position position="138"/>
    </location>
</feature>
<feature type="mutagenesis site" description="Increased acyl-CoA dehydrogenase activity. Changed substrate specificity." evidence="5">
    <original>S</original>
    <variation>N</variation>
    <location>
        <position position="210"/>
    </location>
</feature>
<feature type="mutagenesis site" description="Increased acyl-CoA dehydrogenase activity. No effect on substrate specificity." evidence="5">
    <original>A</original>
    <variation>T</variation>
    <location>
        <position position="416"/>
    </location>
</feature>
<feature type="helix" evidence="23">
    <location>
        <begin position="59"/>
        <end position="75"/>
    </location>
</feature>
<feature type="helix" evidence="23">
    <location>
        <begin position="77"/>
        <end position="79"/>
    </location>
</feature>
<feature type="helix" evidence="23">
    <location>
        <begin position="80"/>
        <end position="86"/>
    </location>
</feature>
<feature type="helix" evidence="23">
    <location>
        <begin position="91"/>
        <end position="99"/>
    </location>
</feature>
<feature type="turn" evidence="23">
    <location>
        <begin position="100"/>
        <end position="103"/>
    </location>
</feature>
<feature type="strand" evidence="23">
    <location>
        <begin position="104"/>
        <end position="107"/>
    </location>
</feature>
<feature type="helix" evidence="23">
    <location>
        <begin position="109"/>
        <end position="111"/>
    </location>
</feature>
<feature type="helix" evidence="23">
    <location>
        <begin position="118"/>
        <end position="129"/>
    </location>
</feature>
<feature type="helix" evidence="23">
    <location>
        <begin position="133"/>
        <end position="144"/>
    </location>
</feature>
<feature type="helix" evidence="23">
    <location>
        <begin position="146"/>
        <end position="153"/>
    </location>
</feature>
<feature type="helix" evidence="23">
    <location>
        <begin position="156"/>
        <end position="168"/>
    </location>
</feature>
<feature type="strand" evidence="23">
    <location>
        <begin position="172"/>
        <end position="175"/>
    </location>
</feature>
<feature type="strand" evidence="23">
    <location>
        <begin position="181"/>
        <end position="184"/>
    </location>
</feature>
<feature type="helix" evidence="23">
    <location>
        <begin position="185"/>
        <end position="187"/>
    </location>
</feature>
<feature type="strand" evidence="23">
    <location>
        <begin position="191"/>
        <end position="195"/>
    </location>
</feature>
<feature type="strand" evidence="23">
    <location>
        <begin position="198"/>
        <end position="209"/>
    </location>
</feature>
<feature type="turn" evidence="23">
    <location>
        <begin position="210"/>
        <end position="213"/>
    </location>
</feature>
<feature type="strand" evidence="23">
    <location>
        <begin position="215"/>
        <end position="223"/>
    </location>
</feature>
<feature type="helix" evidence="23">
    <location>
        <begin position="225"/>
        <end position="231"/>
    </location>
</feature>
<feature type="strand" evidence="23">
    <location>
        <begin position="232"/>
        <end position="238"/>
    </location>
</feature>
<feature type="strand" evidence="23">
    <location>
        <begin position="244"/>
        <end position="246"/>
    </location>
</feature>
<feature type="strand" evidence="23">
    <location>
        <begin position="252"/>
        <end position="254"/>
    </location>
</feature>
<feature type="strand" evidence="23">
    <location>
        <begin position="260"/>
        <end position="271"/>
    </location>
</feature>
<feature type="helix" evidence="23">
    <location>
        <begin position="272"/>
        <end position="274"/>
    </location>
</feature>
<feature type="strand" evidence="23">
    <location>
        <begin position="275"/>
        <end position="278"/>
    </location>
</feature>
<feature type="helix" evidence="23">
    <location>
        <begin position="282"/>
        <end position="318"/>
    </location>
</feature>
<feature type="helix" evidence="23">
    <location>
        <begin position="326"/>
        <end position="328"/>
    </location>
</feature>
<feature type="helix" evidence="23">
    <location>
        <begin position="330"/>
        <end position="358"/>
    </location>
</feature>
<feature type="helix" evidence="23">
    <location>
        <begin position="364"/>
        <end position="389"/>
    </location>
</feature>
<feature type="helix" evidence="23">
    <location>
        <begin position="390"/>
        <end position="394"/>
    </location>
</feature>
<feature type="helix" evidence="23">
    <location>
        <begin position="400"/>
        <end position="407"/>
    </location>
</feature>
<feature type="helix" evidence="23">
    <location>
        <begin position="408"/>
        <end position="411"/>
    </location>
</feature>
<feature type="turn" evidence="23">
    <location>
        <begin position="412"/>
        <end position="414"/>
    </location>
</feature>
<feature type="helix" evidence="23">
    <location>
        <begin position="417"/>
        <end position="431"/>
    </location>
</feature>
<gene>
    <name evidence="20" type="primary">ACADSB</name>
</gene>
<protein>
    <recommendedName>
        <fullName evidence="17">Short/branched chain specific acyl-CoA dehydrogenase, mitochondrial</fullName>
        <shortName evidence="14">SBCAD</shortName>
        <ecNumber evidence="3 9">1.3.8.5</ecNumber>
    </recommendedName>
    <alternativeName>
        <fullName>2-methyl branched chain acyl-CoA dehydrogenase</fullName>
        <shortName>2-MEBCAD</shortName>
    </alternativeName>
    <alternativeName>
        <fullName>2-methylbutyryl-coenzyme A dehydrogenase</fullName>
        <shortName>2-methylbutyryl-CoA dehydrogenase</shortName>
    </alternativeName>
</protein>